<feature type="chain" id="PRO_0000343138" description="UPF0612 protein C569.01c">
    <location>
        <begin position="1"/>
        <end position="323"/>
    </location>
</feature>
<feature type="coiled-coil region" evidence="1">
    <location>
        <begin position="27"/>
        <end position="63"/>
    </location>
</feature>
<feature type="coiled-coil region" evidence="1">
    <location>
        <begin position="131"/>
        <end position="225"/>
    </location>
</feature>
<keyword id="KW-0175">Coiled coil</keyword>
<keyword id="KW-1185">Reference proteome</keyword>
<organism>
    <name type="scientific">Schizosaccharomyces pombe (strain 972 / ATCC 24843)</name>
    <name type="common">Fission yeast</name>
    <dbReference type="NCBI Taxonomy" id="284812"/>
    <lineage>
        <taxon>Eukaryota</taxon>
        <taxon>Fungi</taxon>
        <taxon>Dikarya</taxon>
        <taxon>Ascomycota</taxon>
        <taxon>Taphrinomycotina</taxon>
        <taxon>Schizosaccharomycetes</taxon>
        <taxon>Schizosaccharomycetales</taxon>
        <taxon>Schizosaccharomycetaceae</taxon>
        <taxon>Schizosaccharomyces</taxon>
    </lineage>
</organism>
<reference key="1">
    <citation type="journal article" date="2002" name="Nature">
        <title>The genome sequence of Schizosaccharomyces pombe.</title>
        <authorList>
            <person name="Wood V."/>
            <person name="Gwilliam R."/>
            <person name="Rajandream M.A."/>
            <person name="Lyne M.H."/>
            <person name="Lyne R."/>
            <person name="Stewart A."/>
            <person name="Sgouros J.G."/>
            <person name="Peat N."/>
            <person name="Hayles J."/>
            <person name="Baker S.G."/>
            <person name="Basham D."/>
            <person name="Bowman S."/>
            <person name="Brooks K."/>
            <person name="Brown D."/>
            <person name="Brown S."/>
            <person name="Chillingworth T."/>
            <person name="Churcher C.M."/>
            <person name="Collins M."/>
            <person name="Connor R."/>
            <person name="Cronin A."/>
            <person name="Davis P."/>
            <person name="Feltwell T."/>
            <person name="Fraser A."/>
            <person name="Gentles S."/>
            <person name="Goble A."/>
            <person name="Hamlin N."/>
            <person name="Harris D.E."/>
            <person name="Hidalgo J."/>
            <person name="Hodgson G."/>
            <person name="Holroyd S."/>
            <person name="Hornsby T."/>
            <person name="Howarth S."/>
            <person name="Huckle E.J."/>
            <person name="Hunt S."/>
            <person name="Jagels K."/>
            <person name="James K.D."/>
            <person name="Jones L."/>
            <person name="Jones M."/>
            <person name="Leather S."/>
            <person name="McDonald S."/>
            <person name="McLean J."/>
            <person name="Mooney P."/>
            <person name="Moule S."/>
            <person name="Mungall K.L."/>
            <person name="Murphy L.D."/>
            <person name="Niblett D."/>
            <person name="Odell C."/>
            <person name="Oliver K."/>
            <person name="O'Neil S."/>
            <person name="Pearson D."/>
            <person name="Quail M.A."/>
            <person name="Rabbinowitsch E."/>
            <person name="Rutherford K.M."/>
            <person name="Rutter S."/>
            <person name="Saunders D."/>
            <person name="Seeger K."/>
            <person name="Sharp S."/>
            <person name="Skelton J."/>
            <person name="Simmonds M.N."/>
            <person name="Squares R."/>
            <person name="Squares S."/>
            <person name="Stevens K."/>
            <person name="Taylor K."/>
            <person name="Taylor R.G."/>
            <person name="Tivey A."/>
            <person name="Walsh S.V."/>
            <person name="Warren T."/>
            <person name="Whitehead S."/>
            <person name="Woodward J.R."/>
            <person name="Volckaert G."/>
            <person name="Aert R."/>
            <person name="Robben J."/>
            <person name="Grymonprez B."/>
            <person name="Weltjens I."/>
            <person name="Vanstreels E."/>
            <person name="Rieger M."/>
            <person name="Schaefer M."/>
            <person name="Mueller-Auer S."/>
            <person name="Gabel C."/>
            <person name="Fuchs M."/>
            <person name="Duesterhoeft A."/>
            <person name="Fritzc C."/>
            <person name="Holzer E."/>
            <person name="Moestl D."/>
            <person name="Hilbert H."/>
            <person name="Borzym K."/>
            <person name="Langer I."/>
            <person name="Beck A."/>
            <person name="Lehrach H."/>
            <person name="Reinhardt R."/>
            <person name="Pohl T.M."/>
            <person name="Eger P."/>
            <person name="Zimmermann W."/>
            <person name="Wedler H."/>
            <person name="Wambutt R."/>
            <person name="Purnelle B."/>
            <person name="Goffeau A."/>
            <person name="Cadieu E."/>
            <person name="Dreano S."/>
            <person name="Gloux S."/>
            <person name="Lelaure V."/>
            <person name="Mottier S."/>
            <person name="Galibert F."/>
            <person name="Aves S.J."/>
            <person name="Xiang Z."/>
            <person name="Hunt C."/>
            <person name="Moore K."/>
            <person name="Hurst S.M."/>
            <person name="Lucas M."/>
            <person name="Rochet M."/>
            <person name="Gaillardin C."/>
            <person name="Tallada V.A."/>
            <person name="Garzon A."/>
            <person name="Thode G."/>
            <person name="Daga R.R."/>
            <person name="Cruzado L."/>
            <person name="Jimenez J."/>
            <person name="Sanchez M."/>
            <person name="del Rey F."/>
            <person name="Benito J."/>
            <person name="Dominguez A."/>
            <person name="Revuelta J.L."/>
            <person name="Moreno S."/>
            <person name="Armstrong J."/>
            <person name="Forsburg S.L."/>
            <person name="Cerutti L."/>
            <person name="Lowe T."/>
            <person name="McCombie W.R."/>
            <person name="Paulsen I."/>
            <person name="Potashkin J."/>
            <person name="Shpakovski G.V."/>
            <person name="Ussery D."/>
            <person name="Barrell B.G."/>
            <person name="Nurse P."/>
        </authorList>
    </citation>
    <scope>NUCLEOTIDE SEQUENCE [LARGE SCALE GENOMIC DNA]</scope>
    <source>
        <strain>972 / ATCC 24843</strain>
    </source>
</reference>
<name>YQO1_SCHPO</name>
<protein>
    <recommendedName>
        <fullName>UPF0612 protein C569.01c</fullName>
    </recommendedName>
</protein>
<sequence length="323" mass="38275">MMSNENFDNDYNLPPPNDSAEDLKIFIKRYERSVDSTLLEIDENKREALEKYIEERDRKMKYEIECNERLQGWKKLAIEREISEEQSGEVQFPRWIDEWANTKLGGIFERIFSKMDSMQNDMNSRFDAMQNEMNSRFDAVQNEMTSMKGEMAEMKVEMVEMKRETIRLNTRIDLLEQKTEARFQSIEQRFNSIDQRFNSIDRRFDSMEQRLDSMDQKMETIDARSCRSIMLTRKLENTTRSDQGYLASPVPFLNGNEPANSGLPPIERVEDIDELSKEQCVQYLKGYGIMFSPAETIKLKKRLRDAVGLWSKASTEYEFHQFH</sequence>
<dbReference type="EMBL" id="CU329672">
    <property type="protein sequence ID" value="CAB42062.1"/>
    <property type="molecule type" value="Genomic_DNA"/>
</dbReference>
<dbReference type="PIR" id="T41403">
    <property type="entry name" value="T41403"/>
</dbReference>
<dbReference type="RefSeq" id="NP_588572.1">
    <property type="nucleotide sequence ID" value="NM_001023559.2"/>
</dbReference>
<dbReference type="SMR" id="Q9Y7S0"/>
<dbReference type="BioGRID" id="276123">
    <property type="interactions" value="10"/>
</dbReference>
<dbReference type="STRING" id="284812.Q9Y7S0"/>
<dbReference type="PaxDb" id="4896-SPCC569.01c.1"/>
<dbReference type="EnsemblFungi" id="SPCC569.01c.1">
    <property type="protein sequence ID" value="SPCC569.01c.1:pep"/>
    <property type="gene ID" value="SPCC569.01c"/>
</dbReference>
<dbReference type="KEGG" id="spo:2539562"/>
<dbReference type="PomBase" id="SPCC569.01c"/>
<dbReference type="VEuPathDB" id="FungiDB:SPCC569.01c"/>
<dbReference type="eggNOG" id="ENOG502QQXV">
    <property type="taxonomic scope" value="Eukaryota"/>
</dbReference>
<dbReference type="HOGENOM" id="CLU_062677_0_0_1"/>
<dbReference type="InParanoid" id="Q9Y7S0"/>
<dbReference type="PhylomeDB" id="Q9Y7S0"/>
<dbReference type="PRO" id="PR:Q9Y7S0"/>
<dbReference type="Proteomes" id="UP000002485">
    <property type="component" value="Chromosome III"/>
</dbReference>
<dbReference type="Gene3D" id="3.90.20.10">
    <property type="match status" value="1"/>
</dbReference>
<dbReference type="InterPro" id="IPR013902">
    <property type="entry name" value="Mug135-like_C"/>
</dbReference>
<dbReference type="Pfam" id="PF08593">
    <property type="entry name" value="Mug135_C"/>
    <property type="match status" value="1"/>
</dbReference>
<dbReference type="SUPFAM" id="SSF57997">
    <property type="entry name" value="Tropomyosin"/>
    <property type="match status" value="1"/>
</dbReference>
<evidence type="ECO:0000255" key="1"/>
<evidence type="ECO:0000305" key="2"/>
<comment type="similarity">
    <text evidence="2">Belongs to the UPF0612 family.</text>
</comment>
<proteinExistence type="inferred from homology"/>
<accession>Q9Y7S0</accession>
<gene>
    <name type="ORF">SPCC569.01c</name>
</gene>